<proteinExistence type="predicted"/>
<protein>
    <recommendedName>
        <fullName>Pilin gene-inverting protein</fullName>
    </recommendedName>
    <alternativeName>
        <fullName>PIVML</fullName>
    </alternativeName>
</protein>
<dbReference type="EMBL" id="M34367">
    <property type="protein sequence ID" value="AAA25309.1"/>
    <property type="molecule type" value="Genomic_DNA"/>
</dbReference>
<dbReference type="EMBL" id="M59711">
    <property type="protein sequence ID" value="AAA25305.1"/>
    <property type="molecule type" value="Genomic_DNA"/>
</dbReference>
<dbReference type="PIR" id="A37759">
    <property type="entry name" value="A37759"/>
</dbReference>
<dbReference type="RefSeq" id="WP_076611962.1">
    <property type="nucleotide sequence ID" value="NZ_UGQU01000003.1"/>
</dbReference>
<dbReference type="SMR" id="P19257"/>
<dbReference type="STRING" id="477.A9309_11135"/>
<dbReference type="GO" id="GO:0003677">
    <property type="term" value="F:DNA binding"/>
    <property type="evidence" value="ECO:0007669"/>
    <property type="project" value="UniProtKB-KW"/>
</dbReference>
<dbReference type="GO" id="GO:0000150">
    <property type="term" value="F:DNA strand exchange activity"/>
    <property type="evidence" value="ECO:0007669"/>
    <property type="project" value="UniProtKB-KW"/>
</dbReference>
<dbReference type="GO" id="GO:0004803">
    <property type="term" value="F:transposase activity"/>
    <property type="evidence" value="ECO:0007669"/>
    <property type="project" value="InterPro"/>
</dbReference>
<dbReference type="GO" id="GO:0006313">
    <property type="term" value="P:DNA transposition"/>
    <property type="evidence" value="ECO:0007669"/>
    <property type="project" value="InterPro"/>
</dbReference>
<dbReference type="InterPro" id="IPR002525">
    <property type="entry name" value="Transp_IS110-like_N"/>
</dbReference>
<dbReference type="InterPro" id="IPR047650">
    <property type="entry name" value="Transpos_IS110"/>
</dbReference>
<dbReference type="InterPro" id="IPR003346">
    <property type="entry name" value="Transposase_20"/>
</dbReference>
<dbReference type="NCBIfam" id="NF033542">
    <property type="entry name" value="transpos_IS110"/>
    <property type="match status" value="1"/>
</dbReference>
<dbReference type="PANTHER" id="PTHR33055:SF3">
    <property type="entry name" value="PUTATIVE TRANSPOSASE FOR IS117-RELATED"/>
    <property type="match status" value="1"/>
</dbReference>
<dbReference type="PANTHER" id="PTHR33055">
    <property type="entry name" value="TRANSPOSASE FOR INSERTION SEQUENCE ELEMENT IS1111A"/>
    <property type="match status" value="1"/>
</dbReference>
<dbReference type="Pfam" id="PF01548">
    <property type="entry name" value="DEDD_Tnp_IS110"/>
    <property type="match status" value="1"/>
</dbReference>
<dbReference type="Pfam" id="PF02371">
    <property type="entry name" value="Transposase_20"/>
    <property type="match status" value="1"/>
</dbReference>
<keyword id="KW-0230">DNA invertase</keyword>
<keyword id="KW-0233">DNA recombination</keyword>
<keyword id="KW-0238">DNA-binding</keyword>
<keyword id="KW-1029">Fimbrium biogenesis</keyword>
<sequence length="322" mass="37008">MSKTYIGIDIAKNTFDACFITHNTWQNCTFTNNQQGFIELTLWIQAHHYNTSTLHLIIEATGAYWEKLAHWAISHHHKVSIVNPLYIHAYAKSLGIRTKTDKQDAILLARYGAKENPPLWQPKSDNEIKLTALLKQREHHKRQLIKERTRQEALSIYVKSYTDDNIRHWSDSITQLDHQIWQLINCTPELNYRASLLATIPGIGKKTLPHLLVVIGDGSSFQSAKHLASYAGLAPRHHQSGISIHKQSSIGFSGQKELRSALFMPAVIVSFGRYPAFQKFVKRMEQKGKTKKQIIIAIMRKLLTISYAVIRQNRPFDKRIHE</sequence>
<feature type="chain" id="PRO_0000058449" description="Pilin gene-inverting protein">
    <location>
        <begin position="1"/>
        <end position="322"/>
    </location>
</feature>
<name>PIV_MORLA</name>
<gene>
    <name type="primary">piv</name>
</gene>
<reference key="1">
    <citation type="journal article" date="1990" name="J. Bacteriol.">
        <title>Identification, cloning, and sequencing of piv, a new gene involved in inverting the pilin genes of Moraxella lacunata.</title>
        <authorList>
            <person name="Marrs C.F."/>
            <person name="Rozsa F.W."/>
            <person name="Hackel M."/>
            <person name="Stevens S.P."/>
            <person name="Glasgow A.C."/>
        </authorList>
    </citation>
    <scope>NUCLEOTIDE SEQUENCE [GENOMIC DNA]</scope>
    <source>
        <strain>ATCC 17956 / CIP 70.42 / LMG 1013 / NCDC KC 750 / NCTC 10358 / A179</strain>
    </source>
</reference>
<reference key="2">
    <citation type="journal article" date="1991" name="J. Bacteriol.">
        <title>Interesting sequence differences between the pilin gene inversion regions of Moraxella lacunata ATCC 17956 and Moraxella bovis Epp63.</title>
        <authorList>
            <person name="Rozsa F.W."/>
            <person name="Marrs C.F."/>
        </authorList>
    </citation>
    <scope>NUCLEOTIDE SEQUENCE [GENOMIC DNA] OF 315-322</scope>
    <source>
        <strain>ATCC 17956 / CIP 70.42 / LMG 1013 / NCDC KC 750 / NCTC 10358 / A179</strain>
    </source>
</reference>
<comment type="function">
    <text>May be the site-specific invertase required for pilin gene inversion. Moraxella can express either a Q or I pilin; the inversion of 2 kb of DNA determines which pilin is expressed.</text>
</comment>
<accession>P19257</accession>
<organism>
    <name type="scientific">Moraxella lacunata</name>
    <dbReference type="NCBI Taxonomy" id="477"/>
    <lineage>
        <taxon>Bacteria</taxon>
        <taxon>Pseudomonadati</taxon>
        <taxon>Pseudomonadota</taxon>
        <taxon>Gammaproteobacteria</taxon>
        <taxon>Moraxellales</taxon>
        <taxon>Moraxellaceae</taxon>
        <taxon>Moraxella</taxon>
    </lineage>
</organism>